<feature type="chain" id="PRO_0000214927" description="Actin-depolymerizing factor 5">
    <location>
        <begin position="1"/>
        <end position="143"/>
    </location>
</feature>
<feature type="domain" description="ADF-H" evidence="2">
    <location>
        <begin position="11"/>
        <end position="143"/>
    </location>
</feature>
<protein>
    <recommendedName>
        <fullName>Actin-depolymerizing factor 5</fullName>
        <shortName>ADF-5</shortName>
        <shortName>AtADF5</shortName>
    </recommendedName>
</protein>
<reference key="1">
    <citation type="journal article" date="2001" name="Plant Mol. Biol.">
        <title>Molecular identification and characterization of the Arabidopsis AtADF1, AtADF5 and AtADF6 genes.</title>
        <authorList>
            <person name="Dong C.-H."/>
            <person name="Kost B."/>
            <person name="Xia G.-X."/>
            <person name="Chua N.-H."/>
        </authorList>
    </citation>
    <scope>NUCLEOTIDE SEQUENCE [GENOMIC DNA / MRNA]</scope>
    <scope>TISSUE SPECIFICITY</scope>
    <scope>CHARACTERIZATION</scope>
    <source>
        <strain>cv. Columbia</strain>
    </source>
</reference>
<reference key="2">
    <citation type="journal article" date="1999" name="Nature">
        <title>Sequence and analysis of chromosome 2 of the plant Arabidopsis thaliana.</title>
        <authorList>
            <person name="Lin X."/>
            <person name="Kaul S."/>
            <person name="Rounsley S.D."/>
            <person name="Shea T.P."/>
            <person name="Benito M.-I."/>
            <person name="Town C.D."/>
            <person name="Fujii C.Y."/>
            <person name="Mason T.M."/>
            <person name="Bowman C.L."/>
            <person name="Barnstead M.E."/>
            <person name="Feldblyum T.V."/>
            <person name="Buell C.R."/>
            <person name="Ketchum K.A."/>
            <person name="Lee J.J."/>
            <person name="Ronning C.M."/>
            <person name="Koo H.L."/>
            <person name="Moffat K.S."/>
            <person name="Cronin L.A."/>
            <person name="Shen M."/>
            <person name="Pai G."/>
            <person name="Van Aken S."/>
            <person name="Umayam L."/>
            <person name="Tallon L.J."/>
            <person name="Gill J.E."/>
            <person name="Adams M.D."/>
            <person name="Carrera A.J."/>
            <person name="Creasy T.H."/>
            <person name="Goodman H.M."/>
            <person name="Somerville C.R."/>
            <person name="Copenhaver G.P."/>
            <person name="Preuss D."/>
            <person name="Nierman W.C."/>
            <person name="White O."/>
            <person name="Eisen J.A."/>
            <person name="Salzberg S.L."/>
            <person name="Fraser C.M."/>
            <person name="Venter J.C."/>
        </authorList>
    </citation>
    <scope>NUCLEOTIDE SEQUENCE [LARGE SCALE GENOMIC DNA]</scope>
    <source>
        <strain>cv. Columbia</strain>
    </source>
</reference>
<reference key="3">
    <citation type="journal article" date="2017" name="Plant J.">
        <title>Araport11: a complete reannotation of the Arabidopsis thaliana reference genome.</title>
        <authorList>
            <person name="Cheng C.Y."/>
            <person name="Krishnakumar V."/>
            <person name="Chan A.P."/>
            <person name="Thibaud-Nissen F."/>
            <person name="Schobel S."/>
            <person name="Town C.D."/>
        </authorList>
    </citation>
    <scope>GENOME REANNOTATION</scope>
    <source>
        <strain>cv. Columbia</strain>
    </source>
</reference>
<reference key="4">
    <citation type="journal article" date="2003" name="Science">
        <title>Empirical analysis of transcriptional activity in the Arabidopsis genome.</title>
        <authorList>
            <person name="Yamada K."/>
            <person name="Lim J."/>
            <person name="Dale J.M."/>
            <person name="Chen H."/>
            <person name="Shinn P."/>
            <person name="Palm C.J."/>
            <person name="Southwick A.M."/>
            <person name="Wu H.C."/>
            <person name="Kim C.J."/>
            <person name="Nguyen M."/>
            <person name="Pham P.K."/>
            <person name="Cheuk R.F."/>
            <person name="Karlin-Newmann G."/>
            <person name="Liu S.X."/>
            <person name="Lam B."/>
            <person name="Sakano H."/>
            <person name="Wu T."/>
            <person name="Yu G."/>
            <person name="Miranda M."/>
            <person name="Quach H.L."/>
            <person name="Tripp M."/>
            <person name="Chang C.H."/>
            <person name="Lee J.M."/>
            <person name="Toriumi M.J."/>
            <person name="Chan M.M."/>
            <person name="Tang C.C."/>
            <person name="Onodera C.S."/>
            <person name="Deng J.M."/>
            <person name="Akiyama K."/>
            <person name="Ansari Y."/>
            <person name="Arakawa T."/>
            <person name="Banh J."/>
            <person name="Banno F."/>
            <person name="Bowser L."/>
            <person name="Brooks S.Y."/>
            <person name="Carninci P."/>
            <person name="Chao Q."/>
            <person name="Choy N."/>
            <person name="Enju A."/>
            <person name="Goldsmith A.D."/>
            <person name="Gurjal M."/>
            <person name="Hansen N.F."/>
            <person name="Hayashizaki Y."/>
            <person name="Johnson-Hopson C."/>
            <person name="Hsuan V.W."/>
            <person name="Iida K."/>
            <person name="Karnes M."/>
            <person name="Khan S."/>
            <person name="Koesema E."/>
            <person name="Ishida J."/>
            <person name="Jiang P.X."/>
            <person name="Jones T."/>
            <person name="Kawai J."/>
            <person name="Kamiya A."/>
            <person name="Meyers C."/>
            <person name="Nakajima M."/>
            <person name="Narusaka M."/>
            <person name="Seki M."/>
            <person name="Sakurai T."/>
            <person name="Satou M."/>
            <person name="Tamse R."/>
            <person name="Vaysberg M."/>
            <person name="Wallender E.K."/>
            <person name="Wong C."/>
            <person name="Yamamura Y."/>
            <person name="Yuan S."/>
            <person name="Shinozaki K."/>
            <person name="Davis R.W."/>
            <person name="Theologis A."/>
            <person name="Ecker J.R."/>
        </authorList>
    </citation>
    <scope>NUCLEOTIDE SEQUENCE [LARGE SCALE MRNA]</scope>
    <source>
        <strain>cv. Columbia</strain>
    </source>
</reference>
<reference key="5">
    <citation type="submission" date="2002-03" db="EMBL/GenBank/DDBJ databases">
        <title>Full-length cDNA from Arabidopsis thaliana.</title>
        <authorList>
            <person name="Brover V.V."/>
            <person name="Troukhan M.E."/>
            <person name="Alexandrov N.A."/>
            <person name="Lu Y.-P."/>
            <person name="Flavell R.B."/>
            <person name="Feldmann K.A."/>
        </authorList>
    </citation>
    <scope>NUCLEOTIDE SEQUENCE [LARGE SCALE MRNA]</scope>
</reference>
<reference key="6">
    <citation type="journal article" date="2006" name="J. Plant Physiol.">
        <title>Comparative study of rice and Arabidopsis actin-depolymerizing factors gene families.</title>
        <authorList>
            <person name="Feng Y."/>
            <person name="Liu Q."/>
            <person name="Xue Q."/>
        </authorList>
    </citation>
    <scope>GENE FAMILY</scope>
</reference>
<reference key="7">
    <citation type="journal article" date="2009" name="Plant Cell">
        <title>Actin-depolymerizing factor2-mediated actin dynamics are essential for root-knot nematode infection of Arabidopsis.</title>
        <authorList>
            <person name="Clement M."/>
            <person name="Ketelaar T."/>
            <person name="Rodiuc N."/>
            <person name="Banora M.Y."/>
            <person name="Smertenko A."/>
            <person name="Engler G."/>
            <person name="Abad P."/>
            <person name="Hussey P.J."/>
            <person name="de Almeida Engler J."/>
        </authorList>
    </citation>
    <scope>INDUCTION</scope>
</reference>
<sequence>MAMAFKMATTGMRVTDECTSSFMDMKWKKVHRYIVFKIEEKSRKVTVDKVGGAGESYHDLEDSLPVDDCRYAVFDFDFVTVDNCRKSKIFFIAWSPEASKIRAKILYATSKDGLRRVLEGIHYELQATDPTEMGFDIIQDRAK</sequence>
<gene>
    <name type="primary">ADF5</name>
    <name type="ordered locus">At2g16700</name>
    <name type="ORF">T24I21.11</name>
</gene>
<keyword id="KW-0009">Actin-binding</keyword>
<keyword id="KW-0025">Alternative splicing</keyword>
<keyword id="KW-0963">Cytoplasm</keyword>
<keyword id="KW-0206">Cytoskeleton</keyword>
<keyword id="KW-1185">Reference proteome</keyword>
<organism>
    <name type="scientific">Arabidopsis thaliana</name>
    <name type="common">Mouse-ear cress</name>
    <dbReference type="NCBI Taxonomy" id="3702"/>
    <lineage>
        <taxon>Eukaryota</taxon>
        <taxon>Viridiplantae</taxon>
        <taxon>Streptophyta</taxon>
        <taxon>Embryophyta</taxon>
        <taxon>Tracheophyta</taxon>
        <taxon>Spermatophyta</taxon>
        <taxon>Magnoliopsida</taxon>
        <taxon>eudicotyledons</taxon>
        <taxon>Gunneridae</taxon>
        <taxon>Pentapetalae</taxon>
        <taxon>rosids</taxon>
        <taxon>malvids</taxon>
        <taxon>Brassicales</taxon>
        <taxon>Brassicaceae</taxon>
        <taxon>Camelineae</taxon>
        <taxon>Arabidopsis</taxon>
    </lineage>
</organism>
<evidence type="ECO:0000250" key="1">
    <source>
        <dbReference type="UniProtKB" id="Q9ZSK3"/>
    </source>
</evidence>
<evidence type="ECO:0000255" key="2">
    <source>
        <dbReference type="PROSITE-ProRule" id="PRU00599"/>
    </source>
</evidence>
<evidence type="ECO:0000269" key="3">
    <source>
    </source>
</evidence>
<evidence type="ECO:0000269" key="4">
    <source>
    </source>
</evidence>
<evidence type="ECO:0000305" key="5"/>
<accession>Q9ZNT3</accession>
<accession>Q9SLE7</accession>
<dbReference type="EMBL" id="AF102825">
    <property type="protein sequence ID" value="AAD09113.1"/>
    <property type="molecule type" value="Genomic_DNA"/>
</dbReference>
<dbReference type="EMBL" id="AF102823">
    <property type="protein sequence ID" value="AAD09111.1"/>
    <property type="molecule type" value="mRNA"/>
</dbReference>
<dbReference type="EMBL" id="AC005825">
    <property type="protein sequence ID" value="AAD24603.2"/>
    <property type="molecule type" value="Genomic_DNA"/>
</dbReference>
<dbReference type="EMBL" id="CP002685">
    <property type="protein sequence ID" value="AEC06526.1"/>
    <property type="molecule type" value="Genomic_DNA"/>
</dbReference>
<dbReference type="EMBL" id="AF360302">
    <property type="protein sequence ID" value="AAK26012.1"/>
    <property type="molecule type" value="mRNA"/>
</dbReference>
<dbReference type="EMBL" id="AY051065">
    <property type="protein sequence ID" value="AAK93742.1"/>
    <property type="molecule type" value="mRNA"/>
</dbReference>
<dbReference type="EMBL" id="AY086707">
    <property type="protein sequence ID" value="AAM63761.1"/>
    <property type="molecule type" value="mRNA"/>
</dbReference>
<dbReference type="PIR" id="B84543">
    <property type="entry name" value="B84543"/>
</dbReference>
<dbReference type="RefSeq" id="NP_565390.1">
    <molecule id="Q9ZNT3-1"/>
    <property type="nucleotide sequence ID" value="NM_127222.5"/>
</dbReference>
<dbReference type="SMR" id="Q9ZNT3"/>
<dbReference type="FunCoup" id="Q9ZNT3">
    <property type="interactions" value="2772"/>
</dbReference>
<dbReference type="STRING" id="3702.Q9ZNT3"/>
<dbReference type="PaxDb" id="3702-AT2G16700.1"/>
<dbReference type="ProteomicsDB" id="244855">
    <molecule id="Q9ZNT3-1"/>
</dbReference>
<dbReference type="EnsemblPlants" id="AT2G16700.1">
    <molecule id="Q9ZNT3-1"/>
    <property type="protein sequence ID" value="AT2G16700.1"/>
    <property type="gene ID" value="AT2G16700"/>
</dbReference>
<dbReference type="GeneID" id="816171"/>
<dbReference type="Gramene" id="AT2G16700.1">
    <molecule id="Q9ZNT3-1"/>
    <property type="protein sequence ID" value="AT2G16700.1"/>
    <property type="gene ID" value="AT2G16700"/>
</dbReference>
<dbReference type="KEGG" id="ath:AT2G16700"/>
<dbReference type="Araport" id="AT2G16700"/>
<dbReference type="TAIR" id="AT2G16700">
    <property type="gene designation" value="ADF5"/>
</dbReference>
<dbReference type="eggNOG" id="KOG1735">
    <property type="taxonomic scope" value="Eukaryota"/>
</dbReference>
<dbReference type="HOGENOM" id="CLU_094004_2_2_1"/>
<dbReference type="InParanoid" id="Q9ZNT3"/>
<dbReference type="OMA" id="FKTECRY"/>
<dbReference type="PhylomeDB" id="Q9ZNT3"/>
<dbReference type="PRO" id="PR:Q9ZNT3"/>
<dbReference type="Proteomes" id="UP000006548">
    <property type="component" value="Chromosome 2"/>
</dbReference>
<dbReference type="ExpressionAtlas" id="Q9ZNT3">
    <property type="expression patterns" value="baseline and differential"/>
</dbReference>
<dbReference type="GO" id="GO:0015629">
    <property type="term" value="C:actin cytoskeleton"/>
    <property type="evidence" value="ECO:0007669"/>
    <property type="project" value="InterPro"/>
</dbReference>
<dbReference type="GO" id="GO:0005829">
    <property type="term" value="C:cytosol"/>
    <property type="evidence" value="ECO:0007005"/>
    <property type="project" value="TAIR"/>
</dbReference>
<dbReference type="GO" id="GO:0003779">
    <property type="term" value="F:actin binding"/>
    <property type="evidence" value="ECO:0007669"/>
    <property type="project" value="UniProtKB-KW"/>
</dbReference>
<dbReference type="GO" id="GO:0051017">
    <property type="term" value="P:actin filament bundle assembly"/>
    <property type="evidence" value="ECO:0000314"/>
    <property type="project" value="TAIR"/>
</dbReference>
<dbReference type="GO" id="GO:0030042">
    <property type="term" value="P:actin filament depolymerization"/>
    <property type="evidence" value="ECO:0007669"/>
    <property type="project" value="InterPro"/>
</dbReference>
<dbReference type="CDD" id="cd11286">
    <property type="entry name" value="ADF_cofilin_like"/>
    <property type="match status" value="1"/>
</dbReference>
<dbReference type="FunFam" id="3.40.20.10:FF:000025">
    <property type="entry name" value="Actin-depolymerizing factor 2"/>
    <property type="match status" value="1"/>
</dbReference>
<dbReference type="Gene3D" id="3.40.20.10">
    <property type="entry name" value="Severin"/>
    <property type="match status" value="1"/>
</dbReference>
<dbReference type="InterPro" id="IPR002108">
    <property type="entry name" value="ADF-H"/>
</dbReference>
<dbReference type="InterPro" id="IPR029006">
    <property type="entry name" value="ADF-H/Gelsolin-like_dom_sf"/>
</dbReference>
<dbReference type="InterPro" id="IPR017904">
    <property type="entry name" value="ADF/Cofilin"/>
</dbReference>
<dbReference type="PANTHER" id="PTHR11913">
    <property type="entry name" value="COFILIN-RELATED"/>
    <property type="match status" value="1"/>
</dbReference>
<dbReference type="Pfam" id="PF00241">
    <property type="entry name" value="Cofilin_ADF"/>
    <property type="match status" value="1"/>
</dbReference>
<dbReference type="SMART" id="SM00102">
    <property type="entry name" value="ADF"/>
    <property type="match status" value="1"/>
</dbReference>
<dbReference type="SUPFAM" id="SSF55753">
    <property type="entry name" value="Actin depolymerizing proteins"/>
    <property type="match status" value="1"/>
</dbReference>
<dbReference type="PROSITE" id="PS51263">
    <property type="entry name" value="ADF_H"/>
    <property type="match status" value="1"/>
</dbReference>
<name>ADF5_ARATH</name>
<comment type="function">
    <text evidence="3">Actin-depolymerizing protein. Severs actin filaments (F-actin) and binds to actin monomers.</text>
</comment>
<comment type="subcellular location">
    <subcellularLocation>
        <location evidence="1">Cytoplasm</location>
        <location evidence="1">Cytoskeleton</location>
    </subcellularLocation>
</comment>
<comment type="alternative products">
    <event type="alternative splicing"/>
    <isoform>
        <id>Q9ZNT3-1</id>
        <name>1</name>
        <sequence type="displayed"/>
    </isoform>
    <text>A number of isoforms are produced. According to EST sequences.</text>
</comment>
<comment type="tissue specificity">
    <text evidence="3">Expressed exclusively in root tip meristem.</text>
</comment>
<comment type="induction">
    <text evidence="4">By the root-knot nematode Meloidogyne incognita.</text>
</comment>
<comment type="similarity">
    <text evidence="5">Belongs to the actin-binding proteins ADF family.</text>
</comment>
<proteinExistence type="evidence at protein level"/>